<organism>
    <name type="scientific">Staphylococcus aureus (strain bovine RF122 / ET3-1)</name>
    <dbReference type="NCBI Taxonomy" id="273036"/>
    <lineage>
        <taxon>Bacteria</taxon>
        <taxon>Bacillati</taxon>
        <taxon>Bacillota</taxon>
        <taxon>Bacilli</taxon>
        <taxon>Bacillales</taxon>
        <taxon>Staphylococcaceae</taxon>
        <taxon>Staphylococcus</taxon>
    </lineage>
</organism>
<sequence>MLDFEKPLFEIRNKIESLKESQDKNDVDLQEEIDMLEASLERETKKIYTNLKPWDRVQIARLQERPTTLDYIPYIFDSFMELHGDRNFRDDPAMIGGIGFLNGRAVTVIGQQRGKDTKDNIYRNFGMAHPEGYRKALRLMKQAEKFNRPIFTFIDTKGAYPGKAAEERGQSESIATNLIEMASLKVPVIAIVIGEGGSGGALGIGIANKVLMLENSTYSVISPEGAAALLWKDSNLAKIAAETMKITAHDIKQLGIIDDVISEPLGGAHKDIEQQALAIKSAFVEQLDSLESLSRDEIANDRFEKFRNIGSYIE</sequence>
<name>ACCA_STAAB</name>
<evidence type="ECO:0000255" key="1">
    <source>
        <dbReference type="HAMAP-Rule" id="MF_00823"/>
    </source>
</evidence>
<evidence type="ECO:0000255" key="2">
    <source>
        <dbReference type="PROSITE-ProRule" id="PRU01137"/>
    </source>
</evidence>
<dbReference type="EC" id="2.1.3.15" evidence="1"/>
<dbReference type="EMBL" id="AJ938182">
    <property type="protein sequence ID" value="CAI81247.1"/>
    <property type="molecule type" value="Genomic_DNA"/>
</dbReference>
<dbReference type="RefSeq" id="WP_000883646.1">
    <property type="nucleotide sequence ID" value="NC_007622.1"/>
</dbReference>
<dbReference type="SMR" id="Q2YTE1"/>
<dbReference type="KEGG" id="sab:SAB1558c"/>
<dbReference type="HOGENOM" id="CLU_015486_0_2_9"/>
<dbReference type="UniPathway" id="UPA00655">
    <property type="reaction ID" value="UER00711"/>
</dbReference>
<dbReference type="GO" id="GO:0009317">
    <property type="term" value="C:acetyl-CoA carboxylase complex"/>
    <property type="evidence" value="ECO:0007669"/>
    <property type="project" value="InterPro"/>
</dbReference>
<dbReference type="GO" id="GO:0003989">
    <property type="term" value="F:acetyl-CoA carboxylase activity"/>
    <property type="evidence" value="ECO:0007669"/>
    <property type="project" value="InterPro"/>
</dbReference>
<dbReference type="GO" id="GO:0005524">
    <property type="term" value="F:ATP binding"/>
    <property type="evidence" value="ECO:0007669"/>
    <property type="project" value="UniProtKB-KW"/>
</dbReference>
<dbReference type="GO" id="GO:0016743">
    <property type="term" value="F:carboxyl- or carbamoyltransferase activity"/>
    <property type="evidence" value="ECO:0007669"/>
    <property type="project" value="UniProtKB-UniRule"/>
</dbReference>
<dbReference type="GO" id="GO:0006633">
    <property type="term" value="P:fatty acid biosynthetic process"/>
    <property type="evidence" value="ECO:0007669"/>
    <property type="project" value="UniProtKB-KW"/>
</dbReference>
<dbReference type="GO" id="GO:2001295">
    <property type="term" value="P:malonyl-CoA biosynthetic process"/>
    <property type="evidence" value="ECO:0007669"/>
    <property type="project" value="UniProtKB-UniRule"/>
</dbReference>
<dbReference type="Gene3D" id="3.90.226.10">
    <property type="entry name" value="2-enoyl-CoA Hydratase, Chain A, domain 1"/>
    <property type="match status" value="1"/>
</dbReference>
<dbReference type="HAMAP" id="MF_00823">
    <property type="entry name" value="AcetylCoA_CT_alpha"/>
    <property type="match status" value="1"/>
</dbReference>
<dbReference type="InterPro" id="IPR001095">
    <property type="entry name" value="Acetyl_CoA_COase_a_su"/>
</dbReference>
<dbReference type="InterPro" id="IPR029045">
    <property type="entry name" value="ClpP/crotonase-like_dom_sf"/>
</dbReference>
<dbReference type="InterPro" id="IPR011763">
    <property type="entry name" value="COA_CT_C"/>
</dbReference>
<dbReference type="NCBIfam" id="TIGR00513">
    <property type="entry name" value="accA"/>
    <property type="match status" value="1"/>
</dbReference>
<dbReference type="NCBIfam" id="NF041504">
    <property type="entry name" value="AccA_sub"/>
    <property type="match status" value="1"/>
</dbReference>
<dbReference type="NCBIfam" id="NF004344">
    <property type="entry name" value="PRK05724.1"/>
    <property type="match status" value="1"/>
</dbReference>
<dbReference type="PANTHER" id="PTHR42853">
    <property type="entry name" value="ACETYL-COENZYME A CARBOXYLASE CARBOXYL TRANSFERASE SUBUNIT ALPHA"/>
    <property type="match status" value="1"/>
</dbReference>
<dbReference type="PANTHER" id="PTHR42853:SF3">
    <property type="entry name" value="ACETYL-COENZYME A CARBOXYLASE CARBOXYL TRANSFERASE SUBUNIT ALPHA, CHLOROPLASTIC"/>
    <property type="match status" value="1"/>
</dbReference>
<dbReference type="Pfam" id="PF03255">
    <property type="entry name" value="ACCA"/>
    <property type="match status" value="1"/>
</dbReference>
<dbReference type="PRINTS" id="PR01069">
    <property type="entry name" value="ACCCTRFRASEA"/>
</dbReference>
<dbReference type="SUPFAM" id="SSF52096">
    <property type="entry name" value="ClpP/crotonase"/>
    <property type="match status" value="1"/>
</dbReference>
<dbReference type="PROSITE" id="PS50989">
    <property type="entry name" value="COA_CT_CTER"/>
    <property type="match status" value="1"/>
</dbReference>
<keyword id="KW-0067">ATP-binding</keyword>
<keyword id="KW-0963">Cytoplasm</keyword>
<keyword id="KW-0275">Fatty acid biosynthesis</keyword>
<keyword id="KW-0276">Fatty acid metabolism</keyword>
<keyword id="KW-0444">Lipid biosynthesis</keyword>
<keyword id="KW-0443">Lipid metabolism</keyword>
<keyword id="KW-0547">Nucleotide-binding</keyword>
<keyword id="KW-0808">Transferase</keyword>
<feature type="chain" id="PRO_1000062680" description="Acetyl-coenzyme A carboxylase carboxyl transferase subunit alpha">
    <location>
        <begin position="1"/>
        <end position="314"/>
    </location>
</feature>
<feature type="domain" description="CoA carboxyltransferase C-terminal" evidence="2">
    <location>
        <begin position="32"/>
        <end position="289"/>
    </location>
</feature>
<comment type="function">
    <text evidence="1">Component of the acetyl coenzyme A carboxylase (ACC) complex. First, biotin carboxylase catalyzes the carboxylation of biotin on its carrier protein (BCCP) and then the CO(2) group is transferred by the carboxyltransferase to acetyl-CoA to form malonyl-CoA.</text>
</comment>
<comment type="catalytic activity">
    <reaction evidence="1">
        <text>N(6)-carboxybiotinyl-L-lysyl-[protein] + acetyl-CoA = N(6)-biotinyl-L-lysyl-[protein] + malonyl-CoA</text>
        <dbReference type="Rhea" id="RHEA:54728"/>
        <dbReference type="Rhea" id="RHEA-COMP:10505"/>
        <dbReference type="Rhea" id="RHEA-COMP:10506"/>
        <dbReference type="ChEBI" id="CHEBI:57288"/>
        <dbReference type="ChEBI" id="CHEBI:57384"/>
        <dbReference type="ChEBI" id="CHEBI:83144"/>
        <dbReference type="ChEBI" id="CHEBI:83145"/>
        <dbReference type="EC" id="2.1.3.15"/>
    </reaction>
</comment>
<comment type="pathway">
    <text evidence="1">Lipid metabolism; malonyl-CoA biosynthesis; malonyl-CoA from acetyl-CoA: step 1/1.</text>
</comment>
<comment type="subunit">
    <text evidence="1">Acetyl-CoA carboxylase is a heterohexamer composed of biotin carboxyl carrier protein (AccB), biotin carboxylase (AccC) and two subunits each of ACCase subunit alpha (AccA) and ACCase subunit beta (AccD).</text>
</comment>
<comment type="subcellular location">
    <subcellularLocation>
        <location evidence="1">Cytoplasm</location>
    </subcellularLocation>
</comment>
<comment type="similarity">
    <text evidence="1">Belongs to the AccA family.</text>
</comment>
<gene>
    <name evidence="1" type="primary">accA</name>
    <name type="ordered locus">SAB1558c</name>
</gene>
<protein>
    <recommendedName>
        <fullName evidence="1">Acetyl-coenzyme A carboxylase carboxyl transferase subunit alpha</fullName>
        <shortName evidence="1">ACCase subunit alpha</shortName>
        <shortName evidence="1">Acetyl-CoA carboxylase carboxyltransferase subunit alpha</shortName>
        <ecNumber evidence="1">2.1.3.15</ecNumber>
    </recommendedName>
</protein>
<reference key="1">
    <citation type="journal article" date="2007" name="PLoS ONE">
        <title>Molecular correlates of host specialization in Staphylococcus aureus.</title>
        <authorList>
            <person name="Herron-Olson L."/>
            <person name="Fitzgerald J.R."/>
            <person name="Musser J.M."/>
            <person name="Kapur V."/>
        </authorList>
    </citation>
    <scope>NUCLEOTIDE SEQUENCE [LARGE SCALE GENOMIC DNA]</scope>
    <source>
        <strain>bovine RF122 / ET3-1</strain>
    </source>
</reference>
<accession>Q2YTE1</accession>
<proteinExistence type="inferred from homology"/>